<feature type="chain" id="PRO_0000392792" description="Dermonecrotic toxin LsaSicTox-alphaIB2i">
    <location>
        <begin position="1" status="less than"/>
        <end position="276"/>
    </location>
</feature>
<feature type="active site" evidence="5">
    <location>
        <position position="5"/>
    </location>
</feature>
<feature type="active site" description="Nucleophile" evidence="5">
    <location>
        <position position="41"/>
    </location>
</feature>
<feature type="binding site" evidence="5">
    <location>
        <position position="25"/>
    </location>
    <ligand>
        <name>Mg(2+)</name>
        <dbReference type="ChEBI" id="CHEBI:18420"/>
    </ligand>
</feature>
<feature type="binding site" evidence="5">
    <location>
        <position position="27"/>
    </location>
    <ligand>
        <name>Mg(2+)</name>
        <dbReference type="ChEBI" id="CHEBI:18420"/>
    </ligand>
</feature>
<feature type="binding site" evidence="5">
    <location>
        <position position="85"/>
    </location>
    <ligand>
        <name>Mg(2+)</name>
        <dbReference type="ChEBI" id="CHEBI:18420"/>
    </ligand>
</feature>
<feature type="glycosylation site" description="N-linked (GlcNAc...) asparagine" evidence="6">
    <location>
        <position position="129"/>
    </location>
</feature>
<feature type="glycosylation site" description="N-linked (GlcNAc...) asparagine" evidence="6">
    <location>
        <position position="253"/>
    </location>
</feature>
<feature type="disulfide bond" evidence="3">
    <location>
        <begin position="45"/>
        <end position="51"/>
    </location>
</feature>
<feature type="disulfide bond" evidence="3">
    <location>
        <begin position="47"/>
        <end position="190"/>
    </location>
</feature>
<feature type="non-terminal residue">
    <location>
        <position position="1"/>
    </location>
</feature>
<organism>
    <name type="scientific">Loxosceles sabina</name>
    <name type="common">Tucson recluse spider</name>
    <dbReference type="NCBI Taxonomy" id="571529"/>
    <lineage>
        <taxon>Eukaryota</taxon>
        <taxon>Metazoa</taxon>
        <taxon>Ecdysozoa</taxon>
        <taxon>Arthropoda</taxon>
        <taxon>Chelicerata</taxon>
        <taxon>Arachnida</taxon>
        <taxon>Araneae</taxon>
        <taxon>Araneomorphae</taxon>
        <taxon>Haplogynae</taxon>
        <taxon>Scytodoidea</taxon>
        <taxon>Sicariidae</taxon>
        <taxon>Loxosceles</taxon>
    </lineage>
</organism>
<keyword id="KW-0204">Cytolysis</keyword>
<keyword id="KW-1061">Dermonecrotic toxin</keyword>
<keyword id="KW-1015">Disulfide bond</keyword>
<keyword id="KW-0325">Glycoprotein</keyword>
<keyword id="KW-0354">Hemolysis</keyword>
<keyword id="KW-0442">Lipid degradation</keyword>
<keyword id="KW-0443">Lipid metabolism</keyword>
<keyword id="KW-0456">Lyase</keyword>
<keyword id="KW-0460">Magnesium</keyword>
<keyword id="KW-0479">Metal-binding</keyword>
<keyword id="KW-0964">Secreted</keyword>
<keyword id="KW-0800">Toxin</keyword>
<protein>
    <recommendedName>
        <fullName evidence="7">Dermonecrotic toxin LsaSicTox-alphaIB2i</fullName>
        <ecNumber evidence="4">4.6.1.-</ecNumber>
    </recommendedName>
    <alternativeName>
        <fullName>Phospholipase D</fullName>
        <shortName>PLD</shortName>
    </alternativeName>
    <alternativeName>
        <fullName>Sphingomyelin phosphodiesterase D</fullName>
        <shortName>SMD</shortName>
        <shortName>SMase D</shortName>
        <shortName>Sphingomyelinase D</shortName>
    </alternativeName>
</protein>
<dbReference type="EC" id="4.6.1.-" evidence="4"/>
<dbReference type="EMBL" id="FJ171382">
    <property type="protein sequence ID" value="ACN48878.1"/>
    <property type="molecule type" value="mRNA"/>
</dbReference>
<dbReference type="SMR" id="C0JAU7"/>
<dbReference type="GO" id="GO:0005576">
    <property type="term" value="C:extracellular region"/>
    <property type="evidence" value="ECO:0007669"/>
    <property type="project" value="UniProtKB-SubCell"/>
</dbReference>
<dbReference type="GO" id="GO:0016829">
    <property type="term" value="F:lyase activity"/>
    <property type="evidence" value="ECO:0007669"/>
    <property type="project" value="UniProtKB-KW"/>
</dbReference>
<dbReference type="GO" id="GO:0046872">
    <property type="term" value="F:metal ion binding"/>
    <property type="evidence" value="ECO:0007669"/>
    <property type="project" value="UniProtKB-KW"/>
</dbReference>
<dbReference type="GO" id="GO:0008081">
    <property type="term" value="F:phosphoric diester hydrolase activity"/>
    <property type="evidence" value="ECO:0007669"/>
    <property type="project" value="InterPro"/>
</dbReference>
<dbReference type="GO" id="GO:0090729">
    <property type="term" value="F:toxin activity"/>
    <property type="evidence" value="ECO:0007669"/>
    <property type="project" value="UniProtKB-KW"/>
</dbReference>
<dbReference type="GO" id="GO:0031640">
    <property type="term" value="P:killing of cells of another organism"/>
    <property type="evidence" value="ECO:0007669"/>
    <property type="project" value="UniProtKB-KW"/>
</dbReference>
<dbReference type="GO" id="GO:0016042">
    <property type="term" value="P:lipid catabolic process"/>
    <property type="evidence" value="ECO:0007669"/>
    <property type="project" value="UniProtKB-KW"/>
</dbReference>
<dbReference type="CDD" id="cd08576">
    <property type="entry name" value="GDPD_like_SMaseD_PLD"/>
    <property type="match status" value="1"/>
</dbReference>
<dbReference type="Gene3D" id="3.20.20.190">
    <property type="entry name" value="Phosphatidylinositol (PI) phosphodiesterase"/>
    <property type="match status" value="1"/>
</dbReference>
<dbReference type="InterPro" id="IPR017946">
    <property type="entry name" value="PLC-like_Pdiesterase_TIM-brl"/>
</dbReference>
<dbReference type="Pfam" id="PF13653">
    <property type="entry name" value="GDPD_2"/>
    <property type="match status" value="1"/>
</dbReference>
<dbReference type="SUPFAM" id="SSF51695">
    <property type="entry name" value="PLC-like phosphodiesterases"/>
    <property type="match status" value="1"/>
</dbReference>
<proteinExistence type="evidence at transcript level"/>
<comment type="function">
    <text evidence="1 3">Dermonecrotic toxins cleave the phosphodiester linkage between the phosphate and headgroup of certain phospholipids (sphingolipid and lysolipid substrates), forming an alcohol (often choline) and a cyclic phosphate (By similarity). This toxin acts on sphingomyelin (SM) (By similarity). It may also act on ceramide phosphoethanolamine (CPE), lysophosphatidylcholine (LPC) and lysophosphatidylethanolamine (LPE), but not on lysophosphatidylserine (LPS), and lysophosphatidylglycerol (LPG) (By similarity). It acts by transphosphatidylation, releasing exclusively cyclic phosphate products as second products (By similarity). Induces dermonecrosis, hemolysis, increased vascular permeability, edema, inflammatory response, and platelet aggregation (By similarity).</text>
</comment>
<comment type="catalytic activity">
    <reaction evidence="1">
        <text>an N-(acyl)-sphingosylphosphocholine = an N-(acyl)-sphingosyl-1,3-cyclic phosphate + choline</text>
        <dbReference type="Rhea" id="RHEA:60652"/>
        <dbReference type="ChEBI" id="CHEBI:15354"/>
        <dbReference type="ChEBI" id="CHEBI:64583"/>
        <dbReference type="ChEBI" id="CHEBI:143892"/>
    </reaction>
</comment>
<comment type="catalytic activity">
    <reaction evidence="1">
        <text>an N-(acyl)-sphingosylphosphoethanolamine = an N-(acyl)-sphingosyl-1,3-cyclic phosphate + ethanolamine</text>
        <dbReference type="Rhea" id="RHEA:60648"/>
        <dbReference type="ChEBI" id="CHEBI:57603"/>
        <dbReference type="ChEBI" id="CHEBI:143891"/>
        <dbReference type="ChEBI" id="CHEBI:143892"/>
    </reaction>
</comment>
<comment type="catalytic activity">
    <reaction evidence="1">
        <text>a 1-acyl-sn-glycero-3-phosphocholine = a 1-acyl-sn-glycero-2,3-cyclic phosphate + choline</text>
        <dbReference type="Rhea" id="RHEA:60700"/>
        <dbReference type="ChEBI" id="CHEBI:15354"/>
        <dbReference type="ChEBI" id="CHEBI:58168"/>
        <dbReference type="ChEBI" id="CHEBI:143947"/>
    </reaction>
</comment>
<comment type="catalytic activity">
    <reaction evidence="1">
        <text>a 1-acyl-sn-glycero-3-phosphoethanolamine = a 1-acyl-sn-glycero-2,3-cyclic phosphate + ethanolamine</text>
        <dbReference type="Rhea" id="RHEA:60704"/>
        <dbReference type="ChEBI" id="CHEBI:57603"/>
        <dbReference type="ChEBI" id="CHEBI:64381"/>
        <dbReference type="ChEBI" id="CHEBI:143947"/>
    </reaction>
</comment>
<comment type="cofactor">
    <cofactor evidence="5">
        <name>Mg(2+)</name>
        <dbReference type="ChEBI" id="CHEBI:18420"/>
    </cofactor>
    <text evidence="5">Binds 1 Mg(2+) ion per subunit.</text>
</comment>
<comment type="subcellular location">
    <subcellularLocation>
        <location evidence="9">Secreted</location>
    </subcellularLocation>
</comment>
<comment type="tissue specificity">
    <text evidence="9">Expressed by the venom gland.</text>
</comment>
<comment type="similarity">
    <text evidence="8">Belongs to the arthropod phospholipase D family. Class II subfamily.</text>
</comment>
<comment type="caution">
    <text evidence="1 2 4">The most common activity assay for dermonecrotic toxins detects enzymatic activity by monitoring choline release from substrate. Liberation of choline from sphingomyelin (SM) or lysophosphatidylcholine (LPC) is commonly assumed to result from substrate hydrolysis, giving either ceramide-1-phosphate (C1P) or lysophosphatidic acid (LPA), respectively, as a second product. However, two studies from Lajoie and colleagues (2013 and 2015) report the observation of exclusive formation of cyclic phosphate products as second products, resulting from intramolecular transphosphatidylation. Cyclic phosphates have vastly different biological properties from their monoester counterparts, and they may be relevant to the pathology of brown spider envenomation.</text>
</comment>
<evidence type="ECO:0000250" key="1">
    <source>
        <dbReference type="UniProtKB" id="A0A0D4WTV1"/>
    </source>
</evidence>
<evidence type="ECO:0000250" key="2">
    <source>
        <dbReference type="UniProtKB" id="A0A0D4WV12"/>
    </source>
</evidence>
<evidence type="ECO:0000250" key="3">
    <source>
        <dbReference type="UniProtKB" id="P0CE80"/>
    </source>
</evidence>
<evidence type="ECO:0000250" key="4">
    <source>
        <dbReference type="UniProtKB" id="Q4ZFU2"/>
    </source>
</evidence>
<evidence type="ECO:0000250" key="5">
    <source>
        <dbReference type="UniProtKB" id="Q8I914"/>
    </source>
</evidence>
<evidence type="ECO:0000255" key="6"/>
<evidence type="ECO:0000303" key="7">
    <source>
    </source>
</evidence>
<evidence type="ECO:0000305" key="8"/>
<evidence type="ECO:0000305" key="9">
    <source>
    </source>
</evidence>
<accession>C0JAU7</accession>
<sequence length="276" mass="31437">WIMGHMVNAIYQIDEFVNLGANSIETDVSFDDSANPEYTYHGVPCDCRRWCKKWEYFNNFLKALREATTPGDSKYHEKLVLVVFDLKTNSLYDHQAYDAGKKLAKNLLQHYWNNGNNGGRAYIVLSIPNLSHYKLITGFKETLKNEGHPELMEKVGFDFSGNDNIDQVAKAYKKAGVTGHVWQSDGITNCIASFIRGLDRAKEAVANRDSSNGFINKVYYWTVDKRATTREALDAEVDGIMTNDPDVIADVLNESAYKAKFRIATYDDNPWETFKK</sequence>
<name>A1L1_LOXSA</name>
<reference key="1">
    <citation type="journal article" date="2009" name="Mol. Biol. Evol.">
        <title>Molecular evolution, functional variation, and proposed nomenclature of the gene family that includes sphingomyelinase D in sicariid spider venoms.</title>
        <authorList>
            <person name="Binford G.J."/>
            <person name="Bodner M.R."/>
            <person name="Cordes M.H."/>
            <person name="Baldwin K.L."/>
            <person name="Rynerson M.R."/>
            <person name="Burns S.N."/>
            <person name="Zobel-Thropp P.A."/>
        </authorList>
    </citation>
    <scope>NUCLEOTIDE SEQUENCE [MRNA]</scope>
    <scope>NOMENCLATURE</scope>
    <source>
        <tissue>Venom gland</tissue>
    </source>
</reference>